<proteinExistence type="evidence at protein level"/>
<protein>
    <recommendedName>
        <fullName>Rho GTPase-activating protein SYDE1</fullName>
    </recommendedName>
    <alternativeName>
        <fullName>Synapse defective protein 1 homolog 1</fullName>
        <shortName>Protein syd-1 homolog 1</shortName>
    </alternativeName>
</protein>
<gene>
    <name type="primary">Syde1</name>
</gene>
<evidence type="ECO:0000250" key="1">
    <source>
        <dbReference type="UniProtKB" id="Q6ZW31"/>
    </source>
</evidence>
<evidence type="ECO:0000250" key="2">
    <source>
        <dbReference type="UniProtKB" id="Q9DBZ9"/>
    </source>
</evidence>
<evidence type="ECO:0000255" key="3">
    <source>
        <dbReference type="PROSITE-ProRule" id="PRU00041"/>
    </source>
</evidence>
<evidence type="ECO:0000255" key="4">
    <source>
        <dbReference type="PROSITE-ProRule" id="PRU00172"/>
    </source>
</evidence>
<evidence type="ECO:0000256" key="5">
    <source>
        <dbReference type="SAM" id="MobiDB-lite"/>
    </source>
</evidence>
<evidence type="ECO:0000269" key="6">
    <source>
    </source>
</evidence>
<name>SYDE1_RAT</name>
<sequence length="735" mass="80378">MAEPLLRKTFSRLRGREKLPRKKSDAKDRGRPAQRSEPKPPEPEPRVLEGSQAGAEVPLSPETPRSPARGAYLQSLEPSSRRWVLGGAKPPEEISLGPRTPSSGEPAGEIWYNPIPEEDPRPPAPEPVGSQLASSEPEGPILQGAAPTSPPTKTSRTKSPGPARRLSMKMKKLPELRRRLSLRSTRTSRERERTAPAGSVISRYHLDSSVATPGQASVAGGTRSPRGGYLSDGDSPERPGGPPSPTAFRPYEVGPSARAPPAALWGRLSLHLYGLGGLRPTPGATPRDLCCLLQVDGVARARTGPLRSGPDFLRLDHTFHLELEAARLLRALVLAWDPGVRRHRPCAQGTVLLPTIFRGCQAQQLAVRLEPQGLLYAKLTLSEQQEAPATVEPRVFGLPLQLLVEREQSPGQVPLIIRKCVGQIECRGLRVVGLYRLCGSAAVKKELRDAFEQDSAAVCLSEDVYPDINVITGILKDYLRELPTPLITQPLYQVVLEAMAQGHPSRASLGPEGTRGLLSCLPDVERATLTLLLDHLRLVSSFHTHNRMTPQNLAVCFGPVLLPARQTPSRTRLRGSGPGVSSAVDFKRHIEVLHYLLQSWPDTRRPSETPDVAPYLRPKRQPPLHLPLDGPEVVTRPRGRGGPESPPSNRYAGDWSVCGGDLLPRGRDFLSGPDYDHVTGSDSEEDEDESGEPRGTTDFEDEFDAPFNPHLNLKDFDALILDLERELSKQINVCL</sequence>
<dbReference type="EMBL" id="AABR07055860">
    <property type="status" value="NOT_ANNOTATED_CDS"/>
    <property type="molecule type" value="Genomic_DNA"/>
</dbReference>
<dbReference type="RefSeq" id="NP_001178805.1">
    <property type="nucleotide sequence ID" value="NM_001191876.1"/>
</dbReference>
<dbReference type="SMR" id="D3ZZN9"/>
<dbReference type="FunCoup" id="D3ZZN9">
    <property type="interactions" value="283"/>
</dbReference>
<dbReference type="STRING" id="10116.ENSRNOP00000009606"/>
<dbReference type="GlyGen" id="D3ZZN9">
    <property type="glycosylation" value="3 sites"/>
</dbReference>
<dbReference type="iPTMnet" id="D3ZZN9"/>
<dbReference type="PhosphoSitePlus" id="D3ZZN9"/>
<dbReference type="PaxDb" id="10116-ENSRNOP00000009606"/>
<dbReference type="PeptideAtlas" id="D3ZZN9"/>
<dbReference type="Ensembl" id="ENSRNOT00000009606.7">
    <property type="protein sequence ID" value="ENSRNOP00000009606.4"/>
    <property type="gene ID" value="ENSRNOG00000007307.7"/>
</dbReference>
<dbReference type="GeneID" id="362842"/>
<dbReference type="KEGG" id="rno:362842"/>
<dbReference type="UCSC" id="RGD:1305857">
    <property type="organism name" value="rat"/>
</dbReference>
<dbReference type="AGR" id="RGD:1305857"/>
<dbReference type="CTD" id="85360"/>
<dbReference type="RGD" id="1305857">
    <property type="gene designation" value="Syde1"/>
</dbReference>
<dbReference type="eggNOG" id="KOG1452">
    <property type="taxonomic scope" value="Eukaryota"/>
</dbReference>
<dbReference type="eggNOG" id="KOG4271">
    <property type="taxonomic scope" value="Eukaryota"/>
</dbReference>
<dbReference type="GeneTree" id="ENSGT01030000234635"/>
<dbReference type="HOGENOM" id="CLU_005764_1_1_1"/>
<dbReference type="InParanoid" id="D3ZZN9"/>
<dbReference type="OMA" id="FLQLDHT"/>
<dbReference type="OrthoDB" id="74968at9989"/>
<dbReference type="PhylomeDB" id="D3ZZN9"/>
<dbReference type="TreeFam" id="TF323458"/>
<dbReference type="Reactome" id="R-RNO-9013148">
    <property type="pathway name" value="CDC42 GTPase cycle"/>
</dbReference>
<dbReference type="Reactome" id="R-RNO-9013404">
    <property type="pathway name" value="RAC2 GTPase cycle"/>
</dbReference>
<dbReference type="Reactome" id="R-RNO-9013406">
    <property type="pathway name" value="RHOQ GTPase cycle"/>
</dbReference>
<dbReference type="Reactome" id="R-RNO-9013409">
    <property type="pathway name" value="RHOJ GTPase cycle"/>
</dbReference>
<dbReference type="Reactome" id="R-RNO-9035034">
    <property type="pathway name" value="RHOF GTPase cycle"/>
</dbReference>
<dbReference type="PRO" id="PR:D3ZZN9"/>
<dbReference type="Proteomes" id="UP000002494">
    <property type="component" value="Chromosome 7"/>
</dbReference>
<dbReference type="Bgee" id="ENSRNOG00000007307">
    <property type="expression patterns" value="Expressed in heart and 18 other cell types or tissues"/>
</dbReference>
<dbReference type="GO" id="GO:0044300">
    <property type="term" value="C:cerebellar mossy fiber"/>
    <property type="evidence" value="ECO:0000266"/>
    <property type="project" value="RGD"/>
</dbReference>
<dbReference type="GO" id="GO:0005829">
    <property type="term" value="C:cytosol"/>
    <property type="evidence" value="ECO:0000266"/>
    <property type="project" value="RGD"/>
</dbReference>
<dbReference type="GO" id="GO:0098793">
    <property type="term" value="C:presynapse"/>
    <property type="evidence" value="ECO:0007669"/>
    <property type="project" value="GOC"/>
</dbReference>
<dbReference type="GO" id="GO:0097060">
    <property type="term" value="C:synaptic membrane"/>
    <property type="evidence" value="ECO:0000266"/>
    <property type="project" value="RGD"/>
</dbReference>
<dbReference type="GO" id="GO:0005096">
    <property type="term" value="F:GTPase activator activity"/>
    <property type="evidence" value="ECO:0000266"/>
    <property type="project" value="RGD"/>
</dbReference>
<dbReference type="GO" id="GO:0030695">
    <property type="term" value="F:GTPase regulator activity"/>
    <property type="evidence" value="ECO:0000266"/>
    <property type="project" value="RGD"/>
</dbReference>
<dbReference type="GO" id="GO:0044877">
    <property type="term" value="F:protein-containing complex binding"/>
    <property type="evidence" value="ECO:0000266"/>
    <property type="project" value="RGD"/>
</dbReference>
<dbReference type="GO" id="GO:0030036">
    <property type="term" value="P:actin cytoskeleton organization"/>
    <property type="evidence" value="ECO:0000266"/>
    <property type="project" value="RGD"/>
</dbReference>
<dbReference type="GO" id="GO:0016477">
    <property type="term" value="P:cell migration"/>
    <property type="evidence" value="ECO:0000266"/>
    <property type="project" value="RGD"/>
</dbReference>
<dbReference type="GO" id="GO:0060716">
    <property type="term" value="P:labyrinthine layer blood vessel development"/>
    <property type="evidence" value="ECO:0000266"/>
    <property type="project" value="RGD"/>
</dbReference>
<dbReference type="GO" id="GO:0060711">
    <property type="term" value="P:labyrinthine layer development"/>
    <property type="evidence" value="ECO:0000266"/>
    <property type="project" value="RGD"/>
</dbReference>
<dbReference type="GO" id="GO:0050806">
    <property type="term" value="P:positive regulation of synaptic transmission"/>
    <property type="evidence" value="ECO:0000266"/>
    <property type="project" value="RGD"/>
</dbReference>
<dbReference type="GO" id="GO:1901165">
    <property type="term" value="P:positive regulation of trophoblast cell migration"/>
    <property type="evidence" value="ECO:0000266"/>
    <property type="project" value="RGD"/>
</dbReference>
<dbReference type="GO" id="GO:0051493">
    <property type="term" value="P:regulation of cytoskeleton organization"/>
    <property type="evidence" value="ECO:0000266"/>
    <property type="project" value="RGD"/>
</dbReference>
<dbReference type="GO" id="GO:0046578">
    <property type="term" value="P:regulation of Ras protein signal transduction"/>
    <property type="evidence" value="ECO:0000266"/>
    <property type="project" value="RGD"/>
</dbReference>
<dbReference type="GO" id="GO:0007165">
    <property type="term" value="P:signal transduction"/>
    <property type="evidence" value="ECO:0007669"/>
    <property type="project" value="InterPro"/>
</dbReference>
<dbReference type="GO" id="GO:0016081">
    <property type="term" value="P:synaptic vesicle docking"/>
    <property type="evidence" value="ECO:0000266"/>
    <property type="project" value="RGD"/>
</dbReference>
<dbReference type="GO" id="GO:0007130">
    <property type="term" value="P:synaptonemal complex assembly"/>
    <property type="evidence" value="ECO:0000266"/>
    <property type="project" value="RGD"/>
</dbReference>
<dbReference type="FunFam" id="1.10.555.10:FF:000051">
    <property type="entry name" value="Synapse defective Rho GTPase homolog 1"/>
    <property type="match status" value="1"/>
</dbReference>
<dbReference type="Gene3D" id="1.10.555.10">
    <property type="entry name" value="Rho GTPase activation protein"/>
    <property type="match status" value="1"/>
</dbReference>
<dbReference type="InterPro" id="IPR000008">
    <property type="entry name" value="C2_dom"/>
</dbReference>
<dbReference type="InterPro" id="IPR052118">
    <property type="entry name" value="Rho-GAP_regulator"/>
</dbReference>
<dbReference type="InterPro" id="IPR008936">
    <property type="entry name" value="Rho_GTPase_activation_prot"/>
</dbReference>
<dbReference type="InterPro" id="IPR000198">
    <property type="entry name" value="RhoGAP_dom"/>
</dbReference>
<dbReference type="PANTHER" id="PTHR46150">
    <property type="entry name" value="RHO GTPASE-ACTIVATING PROTEIN 100F"/>
    <property type="match status" value="1"/>
</dbReference>
<dbReference type="PANTHER" id="PTHR46150:SF2">
    <property type="entry name" value="RHO GTPASE-ACTIVATING PROTEIN SYDE1"/>
    <property type="match status" value="1"/>
</dbReference>
<dbReference type="Pfam" id="PF25336">
    <property type="entry name" value="C2_SYDE"/>
    <property type="match status" value="1"/>
</dbReference>
<dbReference type="Pfam" id="PF00620">
    <property type="entry name" value="RhoGAP"/>
    <property type="match status" value="1"/>
</dbReference>
<dbReference type="SMART" id="SM00324">
    <property type="entry name" value="RhoGAP"/>
    <property type="match status" value="1"/>
</dbReference>
<dbReference type="SUPFAM" id="SSF48350">
    <property type="entry name" value="GTPase activation domain, GAP"/>
    <property type="match status" value="1"/>
</dbReference>
<dbReference type="PROSITE" id="PS50004">
    <property type="entry name" value="C2"/>
    <property type="match status" value="1"/>
</dbReference>
<dbReference type="PROSITE" id="PS50238">
    <property type="entry name" value="RHOGAP"/>
    <property type="match status" value="1"/>
</dbReference>
<feature type="chain" id="PRO_0000449472" description="Rho GTPase-activating protein SYDE1">
    <location>
        <begin position="1"/>
        <end position="735"/>
    </location>
</feature>
<feature type="domain" description="C2" evidence="3">
    <location>
        <begin position="249"/>
        <end position="366"/>
    </location>
</feature>
<feature type="domain" description="Rho-GAP" evidence="4">
    <location>
        <begin position="398"/>
        <end position="604"/>
    </location>
</feature>
<feature type="region of interest" description="Disordered" evidence="5">
    <location>
        <begin position="1"/>
        <end position="253"/>
    </location>
</feature>
<feature type="region of interest" description="Disordered" evidence="5">
    <location>
        <begin position="601"/>
        <end position="655"/>
    </location>
</feature>
<feature type="region of interest" description="Disordered" evidence="5">
    <location>
        <begin position="669"/>
        <end position="706"/>
    </location>
</feature>
<feature type="compositionally biased region" description="Basic and acidic residues" evidence="5">
    <location>
        <begin position="14"/>
        <end position="47"/>
    </location>
</feature>
<feature type="compositionally biased region" description="Low complexity" evidence="5">
    <location>
        <begin position="151"/>
        <end position="160"/>
    </location>
</feature>
<feature type="compositionally biased region" description="Basic and acidic residues" evidence="5">
    <location>
        <begin position="669"/>
        <end position="679"/>
    </location>
</feature>
<feature type="site" description="Arginine finger; crucial for GTP hydrolysis by stabilizing the transition state" evidence="4">
    <location>
        <position position="436"/>
    </location>
</feature>
<feature type="modified residue" description="Phosphoserine" evidence="1">
    <location>
        <position position="224"/>
    </location>
</feature>
<feature type="modified residue" description="Phosphoserine" evidence="1">
    <location>
        <position position="231"/>
    </location>
</feature>
<feature type="modified residue" description="Phosphoserine" evidence="1">
    <location>
        <position position="235"/>
    </location>
</feature>
<feature type="modified residue" description="Phosphoserine" evidence="1">
    <location>
        <position position="244"/>
    </location>
</feature>
<feature type="modified residue" description="Phosphoserine" evidence="2">
    <location>
        <position position="681"/>
    </location>
</feature>
<feature type="modified residue" description="Phosphoserine" evidence="1">
    <location>
        <position position="683"/>
    </location>
</feature>
<keyword id="KW-0343">GTPase activation</keyword>
<keyword id="KW-0449">Lipoprotein</keyword>
<keyword id="KW-0564">Palmitate</keyword>
<keyword id="KW-0597">Phosphoprotein</keyword>
<keyword id="KW-1185">Reference proteome</keyword>
<reference key="1">
    <citation type="journal article" date="2004" name="Nature">
        <title>Genome sequence of the Brown Norway rat yields insights into mammalian evolution.</title>
        <authorList>
            <person name="Gibbs R.A."/>
            <person name="Weinstock G.M."/>
            <person name="Metzker M.L."/>
            <person name="Muzny D.M."/>
            <person name="Sodergren E.J."/>
            <person name="Scherer S."/>
            <person name="Scott G."/>
            <person name="Steffen D."/>
            <person name="Worley K.C."/>
            <person name="Burch P.E."/>
            <person name="Okwuonu G."/>
            <person name="Hines S."/>
            <person name="Lewis L."/>
            <person name="Deramo C."/>
            <person name="Delgado O."/>
            <person name="Dugan-Rocha S."/>
            <person name="Miner G."/>
            <person name="Morgan M."/>
            <person name="Hawes A."/>
            <person name="Gill R."/>
            <person name="Holt R.A."/>
            <person name="Adams M.D."/>
            <person name="Amanatides P.G."/>
            <person name="Baden-Tillson H."/>
            <person name="Barnstead M."/>
            <person name="Chin S."/>
            <person name="Evans C.A."/>
            <person name="Ferriera S."/>
            <person name="Fosler C."/>
            <person name="Glodek A."/>
            <person name="Gu Z."/>
            <person name="Jennings D."/>
            <person name="Kraft C.L."/>
            <person name="Nguyen T."/>
            <person name="Pfannkoch C.M."/>
            <person name="Sitter C."/>
            <person name="Sutton G.G."/>
            <person name="Venter J.C."/>
            <person name="Woodage T."/>
            <person name="Smith D."/>
            <person name="Lee H.-M."/>
            <person name="Gustafson E."/>
            <person name="Cahill P."/>
            <person name="Kana A."/>
            <person name="Doucette-Stamm L."/>
            <person name="Weinstock K."/>
            <person name="Fechtel K."/>
            <person name="Weiss R.B."/>
            <person name="Dunn D.M."/>
            <person name="Green E.D."/>
            <person name="Blakesley R.W."/>
            <person name="Bouffard G.G."/>
            <person name="De Jong P.J."/>
            <person name="Osoegawa K."/>
            <person name="Zhu B."/>
            <person name="Marra M."/>
            <person name="Schein J."/>
            <person name="Bosdet I."/>
            <person name="Fjell C."/>
            <person name="Jones S."/>
            <person name="Krzywinski M."/>
            <person name="Mathewson C."/>
            <person name="Siddiqui A."/>
            <person name="Wye N."/>
            <person name="McPherson J."/>
            <person name="Zhao S."/>
            <person name="Fraser C.M."/>
            <person name="Shetty J."/>
            <person name="Shatsman S."/>
            <person name="Geer K."/>
            <person name="Chen Y."/>
            <person name="Abramzon S."/>
            <person name="Nierman W.C."/>
            <person name="Havlak P.H."/>
            <person name="Chen R."/>
            <person name="Durbin K.J."/>
            <person name="Egan A."/>
            <person name="Ren Y."/>
            <person name="Song X.-Z."/>
            <person name="Li B."/>
            <person name="Liu Y."/>
            <person name="Qin X."/>
            <person name="Cawley S."/>
            <person name="Cooney A.J."/>
            <person name="D'Souza L.M."/>
            <person name="Martin K."/>
            <person name="Wu J.Q."/>
            <person name="Gonzalez-Garay M.L."/>
            <person name="Jackson A.R."/>
            <person name="Kalafus K.J."/>
            <person name="McLeod M.P."/>
            <person name="Milosavljevic A."/>
            <person name="Virk D."/>
            <person name="Volkov A."/>
            <person name="Wheeler D.A."/>
            <person name="Zhang Z."/>
            <person name="Bailey J.A."/>
            <person name="Eichler E.E."/>
            <person name="Tuzun E."/>
            <person name="Birney E."/>
            <person name="Mongin E."/>
            <person name="Ureta-Vidal A."/>
            <person name="Woodwark C."/>
            <person name="Zdobnov E."/>
            <person name="Bork P."/>
            <person name="Suyama M."/>
            <person name="Torrents D."/>
            <person name="Alexandersson M."/>
            <person name="Trask B.J."/>
            <person name="Young J.M."/>
            <person name="Huang H."/>
            <person name="Wang H."/>
            <person name="Xing H."/>
            <person name="Daniels S."/>
            <person name="Gietzen D."/>
            <person name="Schmidt J."/>
            <person name="Stevens K."/>
            <person name="Vitt U."/>
            <person name="Wingrove J."/>
            <person name="Camara F."/>
            <person name="Mar Alba M."/>
            <person name="Abril J.F."/>
            <person name="Guigo R."/>
            <person name="Smit A."/>
            <person name="Dubchak I."/>
            <person name="Rubin E.M."/>
            <person name="Couronne O."/>
            <person name="Poliakov A."/>
            <person name="Huebner N."/>
            <person name="Ganten D."/>
            <person name="Goesele C."/>
            <person name="Hummel O."/>
            <person name="Kreitler T."/>
            <person name="Lee Y.-A."/>
            <person name="Monti J."/>
            <person name="Schulz H."/>
            <person name="Zimdahl H."/>
            <person name="Himmelbauer H."/>
            <person name="Lehrach H."/>
            <person name="Jacob H.J."/>
            <person name="Bromberg S."/>
            <person name="Gullings-Handley J."/>
            <person name="Jensen-Seaman M.I."/>
            <person name="Kwitek A.E."/>
            <person name="Lazar J."/>
            <person name="Pasko D."/>
            <person name="Tonellato P.J."/>
            <person name="Twigger S."/>
            <person name="Ponting C.P."/>
            <person name="Duarte J.M."/>
            <person name="Rice S."/>
            <person name="Goodstadt L."/>
            <person name="Beatson S.A."/>
            <person name="Emes R.D."/>
            <person name="Winter E.E."/>
            <person name="Webber C."/>
            <person name="Brandt P."/>
            <person name="Nyakatura G."/>
            <person name="Adetobi M."/>
            <person name="Chiaromonte F."/>
            <person name="Elnitski L."/>
            <person name="Eswara P."/>
            <person name="Hardison R.C."/>
            <person name="Hou M."/>
            <person name="Kolbe D."/>
            <person name="Makova K."/>
            <person name="Miller W."/>
            <person name="Nekrutenko A."/>
            <person name="Riemer C."/>
            <person name="Schwartz S."/>
            <person name="Taylor J."/>
            <person name="Yang S."/>
            <person name="Zhang Y."/>
            <person name="Lindpaintner K."/>
            <person name="Andrews T.D."/>
            <person name="Caccamo M."/>
            <person name="Clamp M."/>
            <person name="Clarke L."/>
            <person name="Curwen V."/>
            <person name="Durbin R.M."/>
            <person name="Eyras E."/>
            <person name="Searle S.M."/>
            <person name="Cooper G.M."/>
            <person name="Batzoglou S."/>
            <person name="Brudno M."/>
            <person name="Sidow A."/>
            <person name="Stone E.A."/>
            <person name="Payseur B.A."/>
            <person name="Bourque G."/>
            <person name="Lopez-Otin C."/>
            <person name="Puente X.S."/>
            <person name="Chakrabarti K."/>
            <person name="Chatterji S."/>
            <person name="Dewey C."/>
            <person name="Pachter L."/>
            <person name="Bray N."/>
            <person name="Yap V.B."/>
            <person name="Caspi A."/>
            <person name="Tesler G."/>
            <person name="Pevzner P.A."/>
            <person name="Haussler D."/>
            <person name="Roskin K.M."/>
            <person name="Baertsch R."/>
            <person name="Clawson H."/>
            <person name="Furey T.S."/>
            <person name="Hinrichs A.S."/>
            <person name="Karolchik D."/>
            <person name="Kent W.J."/>
            <person name="Rosenbloom K.R."/>
            <person name="Trumbower H."/>
            <person name="Weirauch M."/>
            <person name="Cooper D.N."/>
            <person name="Stenson P.D."/>
            <person name="Ma B."/>
            <person name="Brent M."/>
            <person name="Arumugam M."/>
            <person name="Shteynberg D."/>
            <person name="Copley R.R."/>
            <person name="Taylor M.S."/>
            <person name="Riethman H."/>
            <person name="Mudunuri U."/>
            <person name="Peterson J."/>
            <person name="Guyer M."/>
            <person name="Felsenfeld A."/>
            <person name="Old S."/>
            <person name="Mockrin S."/>
            <person name="Collins F.S."/>
        </authorList>
    </citation>
    <scope>NUCLEOTIDE SEQUENCE [LARGE SCALE GENOMIC DNA]</scope>
    <source>
        <strain>Brown Norway</strain>
    </source>
</reference>
<reference key="2">
    <citation type="journal article" date="2012" name="Nat. Commun.">
        <title>Quantitative maps of protein phosphorylation sites across 14 different rat organs and tissues.</title>
        <authorList>
            <person name="Lundby A."/>
            <person name="Secher A."/>
            <person name="Lage K."/>
            <person name="Nordsborg N.B."/>
            <person name="Dmytriyev A."/>
            <person name="Lundby C."/>
            <person name="Olsen J.V."/>
        </authorList>
    </citation>
    <scope>IDENTIFICATION BY MASS SPECTROMETRY [LARGE SCALE ANALYSIS]</scope>
</reference>
<reference key="3">
    <citation type="journal article" date="2013" name="J. Biol. Chem.">
        <title>In silico screening for palmitoyl substrates reveals a role for DHHC1/3/10 (zDHHC1/3/11)-mediated neurochondrin palmitoylation in its targeting to Rab5-positive endosomes.</title>
        <authorList>
            <person name="Oku S."/>
            <person name="Takahashi N."/>
            <person name="Fukata Y."/>
            <person name="Fukata M."/>
        </authorList>
    </citation>
    <scope>PALMITOYLATION</scope>
</reference>
<comment type="function">
    <text evidence="1">GTPase activator for the Rho-type GTPases. As a GCM1 downstream effector, it is involved in placental development and positively regulates trophoblast cells migration. It regulates cytoskeletal remodeling by controlling the activity of Rho GTPases including RHOA, CDC42 and RAC1.</text>
</comment>
<comment type="PTM">
    <text evidence="6">Palmitoylated (PubMed:23687301). Probably palmitoylated by ZDHHC3 and ZDHHC7 (PubMed:23687301).</text>
</comment>
<accession>D3ZZN9</accession>
<organism>
    <name type="scientific">Rattus norvegicus</name>
    <name type="common">Rat</name>
    <dbReference type="NCBI Taxonomy" id="10116"/>
    <lineage>
        <taxon>Eukaryota</taxon>
        <taxon>Metazoa</taxon>
        <taxon>Chordata</taxon>
        <taxon>Craniata</taxon>
        <taxon>Vertebrata</taxon>
        <taxon>Euteleostomi</taxon>
        <taxon>Mammalia</taxon>
        <taxon>Eutheria</taxon>
        <taxon>Euarchontoglires</taxon>
        <taxon>Glires</taxon>
        <taxon>Rodentia</taxon>
        <taxon>Myomorpha</taxon>
        <taxon>Muroidea</taxon>
        <taxon>Muridae</taxon>
        <taxon>Murinae</taxon>
        <taxon>Rattus</taxon>
    </lineage>
</organism>